<sequence>MATGAPGGNFRTWTPTPPERGSFPLDHDGECKEYMTKYLTCMKFTENKNAPNCRILAKQYLKCRMDNQLMEKSDWDSLGLVNLPGENDVELDHHHHLNNNNTKADGKSGSSNSNQNLANTTNNNTGTSSGTK</sequence>
<evidence type="ECO:0000250" key="1"/>
<evidence type="ECO:0000255" key="2">
    <source>
        <dbReference type="PROSITE-ProRule" id="PRU01150"/>
    </source>
</evidence>
<evidence type="ECO:0000256" key="3">
    <source>
        <dbReference type="SAM" id="MobiDB-lite"/>
    </source>
</evidence>
<evidence type="ECO:0000305" key="4"/>
<reference key="1">
    <citation type="journal article" date="2004" name="Proc. Natl. Acad. Sci. U.S.A.">
        <title>The diploid genome sequence of Candida albicans.</title>
        <authorList>
            <person name="Jones T."/>
            <person name="Federspiel N.A."/>
            <person name="Chibana H."/>
            <person name="Dungan J."/>
            <person name="Kalman S."/>
            <person name="Magee B.B."/>
            <person name="Newport G."/>
            <person name="Thorstenson Y.R."/>
            <person name="Agabian N."/>
            <person name="Magee P.T."/>
            <person name="Davis R.W."/>
            <person name="Scherer S."/>
        </authorList>
    </citation>
    <scope>NUCLEOTIDE SEQUENCE [LARGE SCALE GENOMIC DNA]</scope>
    <source>
        <strain>SC5314 / ATCC MYA-2876</strain>
    </source>
</reference>
<reference key="2">
    <citation type="journal article" date="2007" name="Genome Biol.">
        <title>Assembly of the Candida albicans genome into sixteen supercontigs aligned on the eight chromosomes.</title>
        <authorList>
            <person name="van het Hoog M."/>
            <person name="Rast T.J."/>
            <person name="Martchenko M."/>
            <person name="Grindle S."/>
            <person name="Dignard D."/>
            <person name="Hogues H."/>
            <person name="Cuomo C."/>
            <person name="Berriman M."/>
            <person name="Scherer S."/>
            <person name="Magee B.B."/>
            <person name="Whiteway M."/>
            <person name="Chibana H."/>
            <person name="Nantel A."/>
            <person name="Magee P.T."/>
        </authorList>
    </citation>
    <scope>GENOME REANNOTATION</scope>
    <source>
        <strain>SC5314 / ATCC MYA-2876</strain>
    </source>
</reference>
<reference key="3">
    <citation type="journal article" date="2013" name="Genome Biol.">
        <title>Assembly of a phased diploid Candida albicans genome facilitates allele-specific measurements and provides a simple model for repeat and indel structure.</title>
        <authorList>
            <person name="Muzzey D."/>
            <person name="Schwartz K."/>
            <person name="Weissman J.S."/>
            <person name="Sherlock G."/>
        </authorList>
    </citation>
    <scope>NUCLEOTIDE SEQUENCE [LARGE SCALE GENOMIC DNA]</scope>
    <scope>GENOME REANNOTATION</scope>
    <source>
        <strain>SC5314 / ATCC MYA-2876</strain>
    </source>
</reference>
<name>COX19_CANAL</name>
<feature type="chain" id="PRO_0000122285" description="Cytochrome c oxidase assembly protein COX19">
    <location>
        <begin position="1"/>
        <end position="132"/>
    </location>
</feature>
<feature type="domain" description="CHCH" evidence="2">
    <location>
        <begin position="28"/>
        <end position="71"/>
    </location>
</feature>
<feature type="region of interest" description="Disordered" evidence="3">
    <location>
        <begin position="1"/>
        <end position="22"/>
    </location>
</feature>
<feature type="region of interest" description="Disordered" evidence="3">
    <location>
        <begin position="83"/>
        <end position="132"/>
    </location>
</feature>
<feature type="short sequence motif" description="Cx9C motif 1" evidence="2">
    <location>
        <begin position="31"/>
        <end position="41"/>
    </location>
</feature>
<feature type="short sequence motif" description="Cx9C motif 2" evidence="2">
    <location>
        <begin position="53"/>
        <end position="63"/>
    </location>
</feature>
<feature type="compositionally biased region" description="Low complexity" evidence="3">
    <location>
        <begin position="110"/>
        <end position="132"/>
    </location>
</feature>
<feature type="disulfide bond" evidence="2">
    <location>
        <begin position="31"/>
        <end position="63"/>
    </location>
</feature>
<feature type="disulfide bond" evidence="2">
    <location>
        <begin position="41"/>
        <end position="53"/>
    </location>
</feature>
<keyword id="KW-0963">Cytoplasm</keyword>
<keyword id="KW-1015">Disulfide bond</keyword>
<keyword id="KW-0496">Mitochondrion</keyword>
<keyword id="KW-1185">Reference proteome</keyword>
<gene>
    <name type="primary">COX19</name>
    <name type="ordered locus">CAALFM_C113410WA</name>
    <name type="ORF">CaO19.12432</name>
    <name type="ORF">CaO19.4967</name>
</gene>
<comment type="function">
    <text evidence="1">Required for the assembly of mitochondrial cytochrome c oxidase.</text>
</comment>
<comment type="subcellular location">
    <subcellularLocation>
        <location evidence="1">Cytoplasm</location>
    </subcellularLocation>
    <subcellularLocation>
        <location evidence="1">Mitochondrion intermembrane space</location>
    </subcellularLocation>
</comment>
<comment type="similarity">
    <text evidence="4">Belongs to the COX19 family.</text>
</comment>
<proteinExistence type="inferred from homology"/>
<protein>
    <recommendedName>
        <fullName>Cytochrome c oxidase assembly protein COX19</fullName>
    </recommendedName>
</protein>
<accession>Q5AL10</accession>
<accession>A0A1D8PFP1</accession>
<accession>Q5ALD5</accession>
<dbReference type="EMBL" id="CP017623">
    <property type="protein sequence ID" value="AOW26946.1"/>
    <property type="molecule type" value="Genomic_DNA"/>
</dbReference>
<dbReference type="RefSeq" id="XP_019330723.1">
    <property type="nucleotide sequence ID" value="XM_019475178.1"/>
</dbReference>
<dbReference type="SMR" id="Q5AL10"/>
<dbReference type="FunCoup" id="Q5AL10">
    <property type="interactions" value="309"/>
</dbReference>
<dbReference type="STRING" id="237561.Q5AL10"/>
<dbReference type="EnsemblFungi" id="C1_13410W_A-T">
    <property type="protein sequence ID" value="C1_13410W_A-T-p1"/>
    <property type="gene ID" value="C1_13410W_A"/>
</dbReference>
<dbReference type="GeneID" id="3636220"/>
<dbReference type="KEGG" id="cal:CAALFM_C113410WA"/>
<dbReference type="CGD" id="CAL0000176572">
    <property type="gene designation" value="COX19"/>
</dbReference>
<dbReference type="VEuPathDB" id="FungiDB:C1_13410W_A"/>
<dbReference type="eggNOG" id="KOG3477">
    <property type="taxonomic scope" value="Eukaryota"/>
</dbReference>
<dbReference type="HOGENOM" id="CLU_141947_2_0_1"/>
<dbReference type="InParanoid" id="Q5AL10"/>
<dbReference type="OrthoDB" id="268594at2759"/>
<dbReference type="PRO" id="PR:Q5AL10"/>
<dbReference type="Proteomes" id="UP000000559">
    <property type="component" value="Chromosome 1"/>
</dbReference>
<dbReference type="GO" id="GO:0005758">
    <property type="term" value="C:mitochondrial intermembrane space"/>
    <property type="evidence" value="ECO:0000318"/>
    <property type="project" value="GO_Central"/>
</dbReference>
<dbReference type="GO" id="GO:0033617">
    <property type="term" value="P:mitochondrial cytochrome c oxidase assembly"/>
    <property type="evidence" value="ECO:0000318"/>
    <property type="project" value="GO_Central"/>
</dbReference>
<dbReference type="InterPro" id="IPR051383">
    <property type="entry name" value="COX19"/>
</dbReference>
<dbReference type="PANTHER" id="PTHR21107">
    <property type="entry name" value="CYTOCHROME C OXIDASE ASSEMBLY PROTEIN COX19"/>
    <property type="match status" value="1"/>
</dbReference>
<dbReference type="PANTHER" id="PTHR21107:SF2">
    <property type="entry name" value="CYTOCHROME C OXIDASE ASSEMBLY PROTEIN COX19"/>
    <property type="match status" value="1"/>
</dbReference>
<dbReference type="PROSITE" id="PS51808">
    <property type="entry name" value="CHCH"/>
    <property type="match status" value="1"/>
</dbReference>
<organism>
    <name type="scientific">Candida albicans (strain SC5314 / ATCC MYA-2876)</name>
    <name type="common">Yeast</name>
    <dbReference type="NCBI Taxonomy" id="237561"/>
    <lineage>
        <taxon>Eukaryota</taxon>
        <taxon>Fungi</taxon>
        <taxon>Dikarya</taxon>
        <taxon>Ascomycota</taxon>
        <taxon>Saccharomycotina</taxon>
        <taxon>Pichiomycetes</taxon>
        <taxon>Debaryomycetaceae</taxon>
        <taxon>Candida/Lodderomyces clade</taxon>
        <taxon>Candida</taxon>
    </lineage>
</organism>